<gene>
    <name evidence="1" type="primary">psbT</name>
</gene>
<accession>Q7HIW3</accession>
<comment type="function">
    <text evidence="1">Found at the monomer-monomer interface of the photosystem II (PS II) dimer, plays a role in assembly and dimerization of PSII. PSII is a light-driven water plastoquinone oxidoreductase, using light energy to abstract electrons from H(2)O, generating a proton gradient subsequently used for ATP formation.</text>
</comment>
<comment type="subunit">
    <text evidence="1">PSII is composed of 1 copy each of membrane proteins PsbA, PsbB, PsbC, PsbD, PsbE, PsbF, PsbH, PsbI, PsbJ, PsbK, PsbL, PsbM, PsbT, PsbY, PsbZ, Psb30/Ycf12, at least 3 peripheral proteins of the oxygen-evolving complex and a large number of cofactors. It forms dimeric complexes.</text>
</comment>
<comment type="subcellular location">
    <subcellularLocation>
        <location evidence="1">Plastid</location>
        <location evidence="1">Chloroplast thylakoid membrane</location>
        <topology evidence="1">Single-pass membrane protein</topology>
    </subcellularLocation>
</comment>
<comment type="similarity">
    <text evidence="1">Belongs to the PsbT family.</text>
</comment>
<feature type="chain" id="PRO_0000217943" description="Photosystem II reaction center protein T">
    <location>
        <begin position="1"/>
        <end position="33"/>
    </location>
</feature>
<feature type="transmembrane region" description="Helical" evidence="1">
    <location>
        <begin position="3"/>
        <end position="23"/>
    </location>
</feature>
<evidence type="ECO:0000255" key="1">
    <source>
        <dbReference type="HAMAP-Rule" id="MF_00808"/>
    </source>
</evidence>
<sequence>MEALVYTFLLVSTLGIIFFAIFFREPPKVPTKK</sequence>
<name>PSBT_LILSU</name>
<reference key="1">
    <citation type="submission" date="2000-02" db="EMBL/GenBank/DDBJ databases">
        <authorList>
            <person name="Graham S.W."/>
            <person name="Reeves P.A."/>
            <person name="Burns A."/>
            <person name="Olmstead R.G."/>
        </authorList>
    </citation>
    <scope>NUCLEOTIDE SEQUENCE [GENOMIC DNA]</scope>
</reference>
<keyword id="KW-0150">Chloroplast</keyword>
<keyword id="KW-0472">Membrane</keyword>
<keyword id="KW-0602">Photosynthesis</keyword>
<keyword id="KW-0604">Photosystem II</keyword>
<keyword id="KW-0934">Plastid</keyword>
<keyword id="KW-0793">Thylakoid</keyword>
<keyword id="KW-0812">Transmembrane</keyword>
<keyword id="KW-1133">Transmembrane helix</keyword>
<geneLocation type="chloroplast"/>
<dbReference type="EMBL" id="AY007465">
    <property type="protein sequence ID" value="AAG12372.1"/>
    <property type="molecule type" value="Genomic_DNA"/>
</dbReference>
<dbReference type="RefSeq" id="YP_009130240.1">
    <property type="nucleotide sequence ID" value="NC_026787.1"/>
</dbReference>
<dbReference type="SMR" id="Q7HIW3"/>
<dbReference type="GeneID" id="24020137"/>
<dbReference type="GO" id="GO:0009535">
    <property type="term" value="C:chloroplast thylakoid membrane"/>
    <property type="evidence" value="ECO:0007669"/>
    <property type="project" value="UniProtKB-SubCell"/>
</dbReference>
<dbReference type="GO" id="GO:0009539">
    <property type="term" value="C:photosystem II reaction center"/>
    <property type="evidence" value="ECO:0007669"/>
    <property type="project" value="InterPro"/>
</dbReference>
<dbReference type="GO" id="GO:0015979">
    <property type="term" value="P:photosynthesis"/>
    <property type="evidence" value="ECO:0007669"/>
    <property type="project" value="UniProtKB-UniRule"/>
</dbReference>
<dbReference type="HAMAP" id="MF_00808">
    <property type="entry name" value="PSII_PsbT"/>
    <property type="match status" value="1"/>
</dbReference>
<dbReference type="InterPro" id="IPR001743">
    <property type="entry name" value="PSII_PsbT"/>
</dbReference>
<dbReference type="InterPro" id="IPR037268">
    <property type="entry name" value="PSII_PsbT_sf"/>
</dbReference>
<dbReference type="PANTHER" id="PTHR36411">
    <property type="match status" value="1"/>
</dbReference>
<dbReference type="PANTHER" id="PTHR36411:SF2">
    <property type="entry name" value="PHOTOSYSTEM II REACTION CENTER PROTEIN T"/>
    <property type="match status" value="1"/>
</dbReference>
<dbReference type="Pfam" id="PF01405">
    <property type="entry name" value="PsbT"/>
    <property type="match status" value="1"/>
</dbReference>
<dbReference type="SUPFAM" id="SSF161029">
    <property type="entry name" value="Photosystem II reaction center protein T, PsbT"/>
    <property type="match status" value="1"/>
</dbReference>
<protein>
    <recommendedName>
        <fullName evidence="1">Photosystem II reaction center protein T</fullName>
        <shortName evidence="1">PSII-T</shortName>
    </recommendedName>
</protein>
<organism>
    <name type="scientific">Lilium superbum</name>
    <name type="common">Turk's cap lily</name>
    <name type="synonym">Lilium canadense subsp. superbum</name>
    <dbReference type="NCBI Taxonomy" id="4692"/>
    <lineage>
        <taxon>Eukaryota</taxon>
        <taxon>Viridiplantae</taxon>
        <taxon>Streptophyta</taxon>
        <taxon>Embryophyta</taxon>
        <taxon>Tracheophyta</taxon>
        <taxon>Spermatophyta</taxon>
        <taxon>Magnoliopsida</taxon>
        <taxon>Liliopsida</taxon>
        <taxon>Liliales</taxon>
        <taxon>Liliaceae</taxon>
        <taxon>Lilium</taxon>
    </lineage>
</organism>
<proteinExistence type="inferred from homology"/>